<sequence>MSWQAYVDDHLLCDIEGQHLSAAAIVGHDGSVWAQSENFPELKPEEVAGMIKDFDEPGTLAPTGLFVGGTKYMVIQGEPGVVIRGKKGTGGITIKKTGMSLIIGIYDEPMTPGQCNMVVERLGDYLIEQGF</sequence>
<keyword id="KW-0002">3D-structure</keyword>
<keyword id="KW-0009">Actin-binding</keyword>
<keyword id="KW-0020">Allergen</keyword>
<keyword id="KW-0963">Cytoplasm</keyword>
<keyword id="KW-0206">Cytoskeleton</keyword>
<keyword id="KW-1015">Disulfide bond</keyword>
<keyword id="KW-0597">Phosphoprotein</keyword>
<keyword id="KW-1185">Reference proteome</keyword>
<evidence type="ECO:0000250" key="1"/>
<evidence type="ECO:0000250" key="2">
    <source>
        <dbReference type="UniProtKB" id="A4GDU3"/>
    </source>
</evidence>
<evidence type="ECO:0000250" key="3">
    <source>
        <dbReference type="UniProtKB" id="P35081"/>
    </source>
</evidence>
<evidence type="ECO:0000250" key="4">
    <source>
        <dbReference type="UniProtKB" id="Q9ST99"/>
    </source>
</evidence>
<evidence type="ECO:0000250" key="5">
    <source>
        <dbReference type="UniProtKB" id="Q9STB6"/>
    </source>
</evidence>
<evidence type="ECO:0000269" key="6">
    <source>
    </source>
</evidence>
<evidence type="ECO:0000269" key="7">
    <source>
    </source>
</evidence>
<evidence type="ECO:0000269" key="8">
    <source>
    </source>
</evidence>
<evidence type="ECO:0000303" key="9">
    <source>
    </source>
</evidence>
<evidence type="ECO:0000303" key="10">
    <source>
    </source>
</evidence>
<evidence type="ECO:0000305" key="11"/>
<evidence type="ECO:0000305" key="12">
    <source>
    </source>
</evidence>
<evidence type="ECO:0000305" key="13">
    <source>
    </source>
</evidence>
<evidence type="ECO:0000312" key="14">
    <source>
        <dbReference type="EMBL" id="AQL02054.1"/>
    </source>
</evidence>
<evidence type="ECO:0007829" key="15">
    <source>
        <dbReference type="PDB" id="5FEF"/>
    </source>
</evidence>
<organism>
    <name type="scientific">Zea mays</name>
    <name type="common">Maize</name>
    <dbReference type="NCBI Taxonomy" id="4577"/>
    <lineage>
        <taxon>Eukaryota</taxon>
        <taxon>Viridiplantae</taxon>
        <taxon>Streptophyta</taxon>
        <taxon>Embryophyta</taxon>
        <taxon>Tracheophyta</taxon>
        <taxon>Spermatophyta</taxon>
        <taxon>Magnoliopsida</taxon>
        <taxon>Liliopsida</taxon>
        <taxon>Poales</taxon>
        <taxon>Poaceae</taxon>
        <taxon>PACMAD clade</taxon>
        <taxon>Panicoideae</taxon>
        <taxon>Andropogonodae</taxon>
        <taxon>Andropogoneae</taxon>
        <taxon>Tripsacinae</taxon>
        <taxon>Zea</taxon>
    </lineage>
</organism>
<comment type="function">
    <text evidence="6">Binds to actin and affects the structure of the cytoskeleton. At high concentrations, profilin prevents the polymerization of actin, whereas it enhances it at low concentrations. By binding to PIP2, it inhibits the formation of IP3 and DG. Has a high affinity for poly-proline.</text>
</comment>
<comment type="activity regulation">
    <text evidence="6">Actin binding is enhanced by calcium Ca(2+).</text>
</comment>
<comment type="subunit">
    <text evidence="3 8">Multimer (PubMed:27586352). Occurs in many kinds of cells as a complex with monomeric actin in a 1:1 ratio (By similarity).</text>
</comment>
<comment type="subcellular location">
    <subcellularLocation>
        <location evidence="3">Cytoplasm</location>
        <location evidence="3">Cytoskeleton</location>
    </subcellularLocation>
</comment>
<comment type="tissue specificity">
    <text evidence="6">Expressed in vegetative tissues. Present in shoots, roots and coleoptiles. Also detected in endosperm and pollen.</text>
</comment>
<comment type="PTM">
    <text evidence="3">Phosphorylated by MAP kinases.</text>
</comment>
<comment type="polymorphism">
    <text evidence="12">Several isoforms of the allergen exist due to polymorphism.</text>
</comment>
<comment type="allergen">
    <text evidence="8 13">Causes an allergic reaction in human (Probable). Dimerization considerably increases the IgE-mediated degranulation in rat basophilic leukemia cells (PubMed:27586352).</text>
</comment>
<comment type="similarity">
    <text evidence="11">Belongs to the profilin family.</text>
</comment>
<name>PROF5_MAIZE</name>
<reference key="1">
    <citation type="journal article" date="2000" name="Plant Cell">
        <title>Maize profilin isoforms are functionally distinct.</title>
        <authorList>
            <person name="Kovar D.R."/>
            <person name="Droebak B.K."/>
            <person name="Staiger C.J."/>
        </authorList>
    </citation>
    <scope>NUCLEOTIDE SEQUENCE [MRNA]</scope>
    <scope>FUNCTION</scope>
    <scope>TISSUE SPECIFICITY</scope>
    <scope>ACTIVITY REGULATION</scope>
    <scope>POLYMORPHISM</scope>
    <scope>CHARACTERIZATION</scope>
    <source>
        <strain>cv. B73</strain>
    </source>
</reference>
<reference key="2">
    <citation type="journal article" date="2009" name="Science">
        <title>The B73 maize genome: complexity, diversity, and dynamics.</title>
        <authorList>
            <person name="Schnable P.S."/>
            <person name="Ware D."/>
            <person name="Fulton R.S."/>
            <person name="Stein J.C."/>
            <person name="Wei F."/>
            <person name="Pasternak S."/>
            <person name="Liang C."/>
            <person name="Zhang J."/>
            <person name="Fulton L."/>
            <person name="Graves T.A."/>
            <person name="Minx P."/>
            <person name="Reily A.D."/>
            <person name="Courtney L."/>
            <person name="Kruchowski S.S."/>
            <person name="Tomlinson C."/>
            <person name="Strong C."/>
            <person name="Delehaunty K."/>
            <person name="Fronick C."/>
            <person name="Courtney B."/>
            <person name="Rock S.M."/>
            <person name="Belter E."/>
            <person name="Du F."/>
            <person name="Kim K."/>
            <person name="Abbott R.M."/>
            <person name="Cotton M."/>
            <person name="Levy A."/>
            <person name="Marchetto P."/>
            <person name="Ochoa K."/>
            <person name="Jackson S.M."/>
            <person name="Gillam B."/>
            <person name="Chen W."/>
            <person name="Yan L."/>
            <person name="Higginbotham J."/>
            <person name="Cardenas M."/>
            <person name="Waligorski J."/>
            <person name="Applebaum E."/>
            <person name="Phelps L."/>
            <person name="Falcone J."/>
            <person name="Kanchi K."/>
            <person name="Thane T."/>
            <person name="Scimone A."/>
            <person name="Thane N."/>
            <person name="Henke J."/>
            <person name="Wang T."/>
            <person name="Ruppert J."/>
            <person name="Shah N."/>
            <person name="Rotter K."/>
            <person name="Hodges J."/>
            <person name="Ingenthron E."/>
            <person name="Cordes M."/>
            <person name="Kohlberg S."/>
            <person name="Sgro J."/>
            <person name="Delgado B."/>
            <person name="Mead K."/>
            <person name="Chinwalla A."/>
            <person name="Leonard S."/>
            <person name="Crouse K."/>
            <person name="Collura K."/>
            <person name="Kudrna D."/>
            <person name="Currie J."/>
            <person name="He R."/>
            <person name="Angelova A."/>
            <person name="Rajasekar S."/>
            <person name="Mueller T."/>
            <person name="Lomeli R."/>
            <person name="Scara G."/>
            <person name="Ko A."/>
            <person name="Delaney K."/>
            <person name="Wissotski M."/>
            <person name="Lopez G."/>
            <person name="Campos D."/>
            <person name="Braidotti M."/>
            <person name="Ashley E."/>
            <person name="Golser W."/>
            <person name="Kim H."/>
            <person name="Lee S."/>
            <person name="Lin J."/>
            <person name="Dujmic Z."/>
            <person name="Kim W."/>
            <person name="Talag J."/>
            <person name="Zuccolo A."/>
            <person name="Fan C."/>
            <person name="Sebastian A."/>
            <person name="Kramer M."/>
            <person name="Spiegel L."/>
            <person name="Nascimento L."/>
            <person name="Zutavern T."/>
            <person name="Miller B."/>
            <person name="Ambroise C."/>
            <person name="Muller S."/>
            <person name="Spooner W."/>
            <person name="Narechania A."/>
            <person name="Ren L."/>
            <person name="Wei S."/>
            <person name="Kumari S."/>
            <person name="Faga B."/>
            <person name="Levy M.J."/>
            <person name="McMahan L."/>
            <person name="Van Buren P."/>
            <person name="Vaughn M.W."/>
            <person name="Ying K."/>
            <person name="Yeh C.-T."/>
            <person name="Emrich S.J."/>
            <person name="Jia Y."/>
            <person name="Kalyanaraman A."/>
            <person name="Hsia A.-P."/>
            <person name="Barbazuk W.B."/>
            <person name="Baucom R.S."/>
            <person name="Brutnell T.P."/>
            <person name="Carpita N.C."/>
            <person name="Chaparro C."/>
            <person name="Chia J.-M."/>
            <person name="Deragon J.-M."/>
            <person name="Estill J.C."/>
            <person name="Fu Y."/>
            <person name="Jeddeloh J.A."/>
            <person name="Han Y."/>
            <person name="Lee H."/>
            <person name="Li P."/>
            <person name="Lisch D.R."/>
            <person name="Liu S."/>
            <person name="Liu Z."/>
            <person name="Nagel D.H."/>
            <person name="McCann M.C."/>
            <person name="SanMiguel P."/>
            <person name="Myers A.M."/>
            <person name="Nettleton D."/>
            <person name="Nguyen J."/>
            <person name="Penning B.W."/>
            <person name="Ponnala L."/>
            <person name="Schneider K.L."/>
            <person name="Schwartz D.C."/>
            <person name="Sharma A."/>
            <person name="Soderlund C."/>
            <person name="Springer N.M."/>
            <person name="Sun Q."/>
            <person name="Wang H."/>
            <person name="Waterman M."/>
            <person name="Westerman R."/>
            <person name="Wolfgruber T.K."/>
            <person name="Yang L."/>
            <person name="Yu Y."/>
            <person name="Zhang L."/>
            <person name="Zhou S."/>
            <person name="Zhu Q."/>
            <person name="Bennetzen J.L."/>
            <person name="Dawe R.K."/>
            <person name="Jiang J."/>
            <person name="Jiang N."/>
            <person name="Presting G.G."/>
            <person name="Wessler S.R."/>
            <person name="Aluru S."/>
            <person name="Martienssen R.A."/>
            <person name="Clifton S.W."/>
            <person name="McCombie W.R."/>
            <person name="Wing R.A."/>
            <person name="Wilson R.K."/>
        </authorList>
    </citation>
    <scope>NUCLEOTIDE SEQUENCE [LARGE SCALE GENOMIC DNA]</scope>
    <source>
        <strain>cv. B73</strain>
        <tissue>Seedling</tissue>
    </source>
</reference>
<reference key="3">
    <citation type="journal article" date="2009" name="Plant Mol. Biol.">
        <title>Insights into corn genes derived from large-scale cDNA sequencing.</title>
        <authorList>
            <person name="Alexandrov N.N."/>
            <person name="Brover V.V."/>
            <person name="Freidin S."/>
            <person name="Troukhan M.E."/>
            <person name="Tatarinova T.V."/>
            <person name="Zhang H."/>
            <person name="Swaller T.J."/>
            <person name="Lu Y.-P."/>
            <person name="Bouck J."/>
            <person name="Flavell R.B."/>
            <person name="Feldmann K.A."/>
        </authorList>
    </citation>
    <scope>NUCLEOTIDE SEQUENCE [LARGE SCALE MRNA]</scope>
</reference>
<reference key="4">
    <citation type="journal article" date="2009" name="PLoS Genet.">
        <title>Sequencing, mapping, and analysis of 27,455 maize full-length cDNAs.</title>
        <authorList>
            <person name="Soderlund C."/>
            <person name="Descour A."/>
            <person name="Kudrna D."/>
            <person name="Bomhoff M."/>
            <person name="Boyd L."/>
            <person name="Currie J."/>
            <person name="Angelova A."/>
            <person name="Collura K."/>
            <person name="Wissotski M."/>
            <person name="Ashley E."/>
            <person name="Morrow D."/>
            <person name="Fernandes J."/>
            <person name="Walbot V."/>
            <person name="Yu Y."/>
        </authorList>
    </citation>
    <scope>NUCLEOTIDE SEQUENCE [LARGE SCALE MRNA]</scope>
    <source>
        <strain>cv. B73</strain>
    </source>
</reference>
<reference key="5">
    <citation type="journal article" date="2001" name="Biochem. J.">
        <title>The characterization of ligand-specific maize (Zea mays) profilin mutants.</title>
        <authorList>
            <person name="Kovar D.R."/>
            <person name="Droebak B.K."/>
            <person name="Collings D.A."/>
            <person name="Staiger C.J."/>
        </authorList>
    </citation>
    <scope>MUTAGENESIS OF TYR-6; ASP-8 AND LYS-86</scope>
</reference>
<reference key="6">
    <citation type="journal article" date="2016" name="Sci. Rep.">
        <title>Structural insights into the IgE mediated responses induced by the allergens Hev b 8 and Zea m 12 in their dimeric forms.</title>
        <authorList>
            <person name="Mares-Mejia I."/>
            <person name="Martinez-Caballero S."/>
            <person name="Garay-Canales C."/>
            <person name="Cano-Sanchez P."/>
            <person name="Torres-Larios A."/>
            <person name="Lara-Gonzalez S."/>
            <person name="Ortega E."/>
            <person name="Rodriguez-Romero A."/>
        </authorList>
    </citation>
    <scope>X-RAY CRYSTALLOGRAPHY (2.20 ANGSTROMS)</scope>
    <scope>SUBUNIT</scope>
    <scope>ALLERGEN</scope>
</reference>
<protein>
    <recommendedName>
        <fullName evidence="9">Profilin-5</fullName>
        <shortName evidence="9">ZmPRO5</shortName>
    </recommendedName>
    <alternativeName>
        <fullName>Double B-box zinc finger protein 11</fullName>
    </alternativeName>
    <alternativeName>
        <fullName evidence="10">Pollen allergen Zea m 12</fullName>
    </alternativeName>
    <allergenName evidence="10">Zea m 12</allergenName>
</protein>
<dbReference type="EMBL" id="AF201459">
    <property type="protein sequence ID" value="AAG35601.1"/>
    <property type="molecule type" value="mRNA"/>
</dbReference>
<dbReference type="EMBL" id="CM000785">
    <property type="protein sequence ID" value="AQL02054.1"/>
    <property type="molecule type" value="Genomic_DNA"/>
</dbReference>
<dbReference type="EMBL" id="CM000785">
    <property type="protein sequence ID" value="AQL02058.1"/>
    <property type="molecule type" value="Genomic_DNA"/>
</dbReference>
<dbReference type="EMBL" id="EU952424">
    <property type="protein sequence ID" value="ACG24542.1"/>
    <property type="molecule type" value="mRNA"/>
</dbReference>
<dbReference type="EMBL" id="EU958791">
    <property type="protein sequence ID" value="ACG30909.1"/>
    <property type="molecule type" value="mRNA"/>
</dbReference>
<dbReference type="EMBL" id="EU959080">
    <property type="protein sequence ID" value="ACG31198.1"/>
    <property type="molecule type" value="mRNA"/>
</dbReference>
<dbReference type="EMBL" id="EU960195">
    <property type="protein sequence ID" value="ACG32313.1"/>
    <property type="molecule type" value="mRNA"/>
</dbReference>
<dbReference type="EMBL" id="EU967239">
    <property type="protein sequence ID" value="ACG39357.1"/>
    <property type="molecule type" value="mRNA"/>
</dbReference>
<dbReference type="EMBL" id="BT041006">
    <property type="protein sequence ID" value="ACF86011.1"/>
    <property type="molecule type" value="mRNA"/>
</dbReference>
<dbReference type="RefSeq" id="NP_001105622.1">
    <property type="nucleotide sequence ID" value="NM_001112152.1"/>
</dbReference>
<dbReference type="PDB" id="5FEF">
    <property type="method" value="X-ray"/>
    <property type="resolution" value="2.20 A"/>
    <property type="chains" value="A=1-131"/>
</dbReference>
<dbReference type="PDBsum" id="5FEF"/>
<dbReference type="SMR" id="Q9FR39"/>
<dbReference type="FunCoup" id="Q9FR39">
    <property type="interactions" value="734"/>
</dbReference>
<dbReference type="STRING" id="4577.Q9FR39"/>
<dbReference type="Allergome" id="3533">
    <property type="allergen name" value="Zea m 12.0105"/>
</dbReference>
<dbReference type="Allergome" id="682">
    <property type="allergen name" value="Zea m 12"/>
</dbReference>
<dbReference type="PaxDb" id="4577-GRMZM5G877388_P02"/>
<dbReference type="EnsemblPlants" id="Zm00001eb376740_T001">
    <property type="protein sequence ID" value="Zm00001eb376740_P001"/>
    <property type="gene ID" value="Zm00001eb376740"/>
</dbReference>
<dbReference type="GeneID" id="542625"/>
<dbReference type="Gramene" id="Zm00001eb376740_T001">
    <property type="protein sequence ID" value="Zm00001eb376740_P001"/>
    <property type="gene ID" value="Zm00001eb376740"/>
</dbReference>
<dbReference type="KEGG" id="zma:542625"/>
<dbReference type="MaizeGDB" id="314492"/>
<dbReference type="eggNOG" id="KOG1755">
    <property type="taxonomic scope" value="Eukaryota"/>
</dbReference>
<dbReference type="HOGENOM" id="CLU_120772_0_1_1"/>
<dbReference type="InParanoid" id="Q9FR39"/>
<dbReference type="OMA" id="EPMNAGQ"/>
<dbReference type="OrthoDB" id="421374at2759"/>
<dbReference type="Proteomes" id="UP000007305">
    <property type="component" value="Chromosome 9"/>
</dbReference>
<dbReference type="ExpressionAtlas" id="Q9FR39">
    <property type="expression patterns" value="baseline and differential"/>
</dbReference>
<dbReference type="GO" id="GO:0005938">
    <property type="term" value="C:cell cortex"/>
    <property type="evidence" value="ECO:0000318"/>
    <property type="project" value="GO_Central"/>
</dbReference>
<dbReference type="GO" id="GO:0005856">
    <property type="term" value="C:cytoskeleton"/>
    <property type="evidence" value="ECO:0007669"/>
    <property type="project" value="UniProtKB-SubCell"/>
</dbReference>
<dbReference type="GO" id="GO:0003785">
    <property type="term" value="F:actin monomer binding"/>
    <property type="evidence" value="ECO:0000315"/>
    <property type="project" value="AgBase"/>
</dbReference>
<dbReference type="GO" id="GO:0005546">
    <property type="term" value="F:phosphatidylinositol-4,5-bisphosphate binding"/>
    <property type="evidence" value="ECO:0000304"/>
    <property type="project" value="AgBase"/>
</dbReference>
<dbReference type="GO" id="GO:0070064">
    <property type="term" value="F:proline-rich region binding"/>
    <property type="evidence" value="ECO:0000315"/>
    <property type="project" value="AgBase"/>
</dbReference>
<dbReference type="GO" id="GO:0007097">
    <property type="term" value="P:nuclear migration"/>
    <property type="evidence" value="ECO:0000315"/>
    <property type="project" value="AgBase"/>
</dbReference>
<dbReference type="GO" id="GO:0030845">
    <property type="term" value="P:phospholipase C-inhibiting G protein-coupled receptor signaling pathway"/>
    <property type="evidence" value="ECO:0000314"/>
    <property type="project" value="AgBase"/>
</dbReference>
<dbReference type="GO" id="GO:0032956">
    <property type="term" value="P:regulation of actin cytoskeleton organization"/>
    <property type="evidence" value="ECO:0000304"/>
    <property type="project" value="AgBase"/>
</dbReference>
<dbReference type="CDD" id="cd00148">
    <property type="entry name" value="PROF"/>
    <property type="match status" value="1"/>
</dbReference>
<dbReference type="FunFam" id="3.30.450.30:FF:000001">
    <property type="entry name" value="Profilin"/>
    <property type="match status" value="1"/>
</dbReference>
<dbReference type="Gene3D" id="3.30.450.30">
    <property type="entry name" value="Dynein light chain 2a, cytoplasmic"/>
    <property type="match status" value="1"/>
</dbReference>
<dbReference type="InterPro" id="IPR048278">
    <property type="entry name" value="PFN"/>
</dbReference>
<dbReference type="InterPro" id="IPR005455">
    <property type="entry name" value="PFN_euk"/>
</dbReference>
<dbReference type="InterPro" id="IPR036140">
    <property type="entry name" value="PFN_sf"/>
</dbReference>
<dbReference type="InterPro" id="IPR027310">
    <property type="entry name" value="Profilin_CS"/>
</dbReference>
<dbReference type="PANTHER" id="PTHR11604">
    <property type="entry name" value="PROFILIN"/>
    <property type="match status" value="1"/>
</dbReference>
<dbReference type="PANTHER" id="PTHR11604:SF69">
    <property type="entry name" value="PROFILIN-4"/>
    <property type="match status" value="1"/>
</dbReference>
<dbReference type="Pfam" id="PF00235">
    <property type="entry name" value="Profilin"/>
    <property type="match status" value="1"/>
</dbReference>
<dbReference type="PRINTS" id="PR00392">
    <property type="entry name" value="PROFILIN"/>
</dbReference>
<dbReference type="PRINTS" id="PR01640">
    <property type="entry name" value="PROFILINPLNT"/>
</dbReference>
<dbReference type="SMART" id="SM00392">
    <property type="entry name" value="PROF"/>
    <property type="match status" value="1"/>
</dbReference>
<dbReference type="SUPFAM" id="SSF55770">
    <property type="entry name" value="Profilin (actin-binding protein)"/>
    <property type="match status" value="1"/>
</dbReference>
<dbReference type="PROSITE" id="PS00414">
    <property type="entry name" value="PROFILIN"/>
    <property type="match status" value="1"/>
</dbReference>
<accession>Q9FR39</accession>
<accession>B4FV68</accession>
<proteinExistence type="evidence at protein level"/>
<gene>
    <name evidence="9" type="primary">PRO5</name>
    <name type="synonym">DBB11</name>
    <name type="synonym">PRF5</name>
    <name evidence="14" type="ORF">ZEAMMB73_Zm00001d045323</name>
</gene>
<feature type="initiator methionine" description="Removed" evidence="1">
    <location>
        <position position="1"/>
    </location>
</feature>
<feature type="chain" id="PRO_0000199650" description="Profilin-5">
    <location>
        <begin position="2"/>
        <end position="131"/>
    </location>
</feature>
<feature type="short sequence motif" description="Involved in PIP2 interaction" evidence="3">
    <location>
        <begin position="81"/>
        <end position="97"/>
    </location>
</feature>
<feature type="modified residue" description="Phosphothreonine" evidence="4">
    <location>
        <position position="111"/>
    </location>
</feature>
<feature type="disulfide bond" evidence="2">
    <location>
        <begin position="13"/>
        <end position="115"/>
    </location>
</feature>
<feature type="disulfide bond" description="Interchain" evidence="5">
    <location>
        <position position="13"/>
    </location>
</feature>
<feature type="mutagenesis site" description="Increased affinity for poly-(L-proline) (PLP)." evidence="7">
    <original>Y</original>
    <variation>F</variation>
    <location>
        <position position="6"/>
    </location>
</feature>
<feature type="mutagenesis site" description="Decreased affinity for poly-(L-proline) (PLP)." evidence="7">
    <original>Y</original>
    <variation>Q</variation>
    <location>
        <position position="6"/>
    </location>
</feature>
<feature type="mutagenesis site" description="Increased affinity for PtdIns(4,5)P(2)." evidence="7">
    <original>D</original>
    <variation>A</variation>
    <location>
        <position position="8"/>
    </location>
</feature>
<feature type="mutagenesis site" description="Strongly decreased affinity for G-actin." evidence="7">
    <original>K</original>
    <variation>A</variation>
    <location>
        <position position="86"/>
    </location>
</feature>
<feature type="helix" evidence="15">
    <location>
        <begin position="3"/>
        <end position="10"/>
    </location>
</feature>
<feature type="strand" evidence="15">
    <location>
        <begin position="21"/>
        <end position="27"/>
    </location>
</feature>
<feature type="strand" evidence="15">
    <location>
        <begin position="32"/>
        <end position="35"/>
    </location>
</feature>
<feature type="helix" evidence="15">
    <location>
        <begin position="46"/>
        <end position="55"/>
    </location>
</feature>
<feature type="turn" evidence="15">
    <location>
        <begin position="57"/>
        <end position="59"/>
    </location>
</feature>
<feature type="helix" evidence="15">
    <location>
        <begin position="60"/>
        <end position="63"/>
    </location>
</feature>
<feature type="strand" evidence="15">
    <location>
        <begin position="65"/>
        <end position="67"/>
    </location>
</feature>
<feature type="strand" evidence="15">
    <location>
        <begin position="70"/>
        <end position="78"/>
    </location>
</feature>
<feature type="turn" evidence="15">
    <location>
        <begin position="79"/>
        <end position="81"/>
    </location>
</feature>
<feature type="strand" evidence="15">
    <location>
        <begin position="82"/>
        <end position="87"/>
    </location>
</feature>
<feature type="strand" evidence="15">
    <location>
        <begin position="90"/>
        <end position="96"/>
    </location>
</feature>
<feature type="strand" evidence="15">
    <location>
        <begin position="98"/>
        <end position="106"/>
    </location>
</feature>
<feature type="helix" evidence="15">
    <location>
        <begin position="112"/>
        <end position="129"/>
    </location>
</feature>